<reference key="1">
    <citation type="journal article" date="2004" name="Nature">
        <title>Genome evolution in yeasts.</title>
        <authorList>
            <person name="Dujon B."/>
            <person name="Sherman D."/>
            <person name="Fischer G."/>
            <person name="Durrens P."/>
            <person name="Casaregola S."/>
            <person name="Lafontaine I."/>
            <person name="de Montigny J."/>
            <person name="Marck C."/>
            <person name="Neuveglise C."/>
            <person name="Talla E."/>
            <person name="Goffard N."/>
            <person name="Frangeul L."/>
            <person name="Aigle M."/>
            <person name="Anthouard V."/>
            <person name="Babour A."/>
            <person name="Barbe V."/>
            <person name="Barnay S."/>
            <person name="Blanchin S."/>
            <person name="Beckerich J.-M."/>
            <person name="Beyne E."/>
            <person name="Bleykasten C."/>
            <person name="Boisrame A."/>
            <person name="Boyer J."/>
            <person name="Cattolico L."/>
            <person name="Confanioleri F."/>
            <person name="de Daruvar A."/>
            <person name="Despons L."/>
            <person name="Fabre E."/>
            <person name="Fairhead C."/>
            <person name="Ferry-Dumazet H."/>
            <person name="Groppi A."/>
            <person name="Hantraye F."/>
            <person name="Hennequin C."/>
            <person name="Jauniaux N."/>
            <person name="Joyet P."/>
            <person name="Kachouri R."/>
            <person name="Kerrest A."/>
            <person name="Koszul R."/>
            <person name="Lemaire M."/>
            <person name="Lesur I."/>
            <person name="Ma L."/>
            <person name="Muller H."/>
            <person name="Nicaud J.-M."/>
            <person name="Nikolski M."/>
            <person name="Oztas S."/>
            <person name="Ozier-Kalogeropoulos O."/>
            <person name="Pellenz S."/>
            <person name="Potier S."/>
            <person name="Richard G.-F."/>
            <person name="Straub M.-L."/>
            <person name="Suleau A."/>
            <person name="Swennen D."/>
            <person name="Tekaia F."/>
            <person name="Wesolowski-Louvel M."/>
            <person name="Westhof E."/>
            <person name="Wirth B."/>
            <person name="Zeniou-Meyer M."/>
            <person name="Zivanovic Y."/>
            <person name="Bolotin-Fukuhara M."/>
            <person name="Thierry A."/>
            <person name="Bouchier C."/>
            <person name="Caudron B."/>
            <person name="Scarpelli C."/>
            <person name="Gaillardin C."/>
            <person name="Weissenbach J."/>
            <person name="Wincker P."/>
            <person name="Souciet J.-L."/>
        </authorList>
    </citation>
    <scope>NUCLEOTIDE SEQUENCE [LARGE SCALE GENOMIC DNA]</scope>
    <source>
        <strain>ATCC 2001 / BCRC 20586 / JCM 3761 / NBRC 0622 / NRRL Y-65 / CBS 138</strain>
    </source>
</reference>
<sequence>MYQYSNQTGNGVYGNPPMQPLQNYGSSGYQQTAPMQQPLQTGYQQPMQQTMNQNQGMQLPQQQYQQQQPLQQQPMQQQPMQQQSFQQPQLQQPLQQQPTQTGMQQQPLQQQLTQSGMLQQPLQPQMQQSSQTIQPNQLNVQNTVQSQQSVQPLLPQQTGFYRQGNQPVLEPLKPTATGFVNSFANNGLDNNLKIPAIRLSFITAQDQAKFETLFRSIVTKGSNTVSGENCRAILMKSGLQPSQLARIWQLSDTNRAGELLFPEFALAMHLINNVLQGDSIPYELDSKTKNEVSSFIDAINLSVVSTESDFKTPFDDLFKPQQSLQPQGTGFLPQTSFGLPAQPTGGFGQPQPTTFGQLQAQVTGGFGQPQPTTFGLQPQTTGGFVQAQQVTGGIAQQPSMNPLTQQGTGFAQNQQGTGGFLQQQGTGSFNNAGFVQPQNTGSFVPQQQQQPVVQSQPIAPQSTGGFGPPMPTTFGIQPQSTGGFVQPQVTGGLQPALTGNIPQTSFGAQPFNQQLQPQATGYLPPSQFSATMPLTAQKTGFGNNEIYAQSNFNGPSFSTQESDIITSEEKSLFYKIFETFSQNRGVLDSATAVEIFRKSGLNRSDLEKIWNLCDINNTGQLNKQEFALGMHLVYGRLNGRSIPDRLPPSLIPSSTKILDNVKNQLISSSSDGNRKSFTRMDALSYKNDDNDKLPNFRNRRKNYPTDNDADKERQRRQEREREEAAKKKEQERKTKMDIERARKQGSFTNSEPEFTDVSVSEIEDIKRRITEAQQKLAVRNQSIPNDLKKRFNEVVARLPTLFVEIYKVDTEIMQARIELCKRRTPSSIIGTGPGGSITEDDRRKAKSKALLRSRMNALTGKGDNSDEPDIESESFTKEIEKIQSESAQNKKIIKDIRISISELSAPIRSIMTGSLPTCSSTDFEKWEIGVGLENDVREFVLTLKKGLLYVSEPSHMNSNQTLSHPPAAALKKEATGEDRAAQLKEQAQKRMKERLAKFGISRRETRDLESSKQQESGSTPDAVPAAQTANASQTPFEEVISSPQKMEVTSTAGEDNEEEDEEERKLKEQLELLKQKKNAEKEKRLADLRRQIEEAEKEEEHPSVAQSNSGNVQSSSNQPASVPVANSQPQNLQNTHITTKPLSLNQTGSSYDMASNTYFKPTQTSQSAFDREKAEQQRKIQRGLESDDDGWSDDDDDLYSKPNTAPQTAPVLDSSNTPQPGMNASVPAPIAPPIPTPQASSPAVPVAPPIPAVTPSESSIPMTSNADVAGADHLDQDTDISGAAASADKQNTSHVSHIPPVPVAPPLPQVSSIAPPPPLPNLSVPQPHETVDNDDGSDVLSIPDSVESDKEDLAPAGHTPAAMGIPPPPPLPNF</sequence>
<feature type="chain" id="PRO_0000349472" description="Actin cytoskeleton-regulatory complex protein PAN1">
    <location>
        <begin position="1"/>
        <end position="1374"/>
    </location>
</feature>
<feature type="domain" description="EH 1" evidence="3">
    <location>
        <begin position="206"/>
        <end position="295"/>
    </location>
</feature>
<feature type="domain" description="EF-hand 1" evidence="4">
    <location>
        <begin position="239"/>
        <end position="274"/>
    </location>
</feature>
<feature type="domain" description="EH 2" evidence="3">
    <location>
        <begin position="569"/>
        <end position="657"/>
    </location>
</feature>
<feature type="domain" description="EF-hand 2" evidence="4">
    <location>
        <begin position="601"/>
        <end position="636"/>
    </location>
</feature>
<feature type="region of interest" description="Disordered" evidence="5">
    <location>
        <begin position="1"/>
        <end position="33"/>
    </location>
</feature>
<feature type="region of interest" description="Disordered" evidence="5">
    <location>
        <begin position="52"/>
        <end position="114"/>
    </location>
</feature>
<feature type="region of interest" description="Disordered" evidence="5">
    <location>
        <begin position="668"/>
        <end position="737"/>
    </location>
</feature>
<feature type="region of interest" description="Disordered" evidence="5">
    <location>
        <begin position="971"/>
        <end position="1374"/>
    </location>
</feature>
<feature type="coiled-coil region" evidence="2">
    <location>
        <begin position="706"/>
        <end position="783"/>
    </location>
</feature>
<feature type="coiled-coil region" evidence="2">
    <location>
        <begin position="1050"/>
        <end position="1103"/>
    </location>
</feature>
<feature type="compositionally biased region" description="Polar residues" evidence="5">
    <location>
        <begin position="1"/>
        <end position="10"/>
    </location>
</feature>
<feature type="compositionally biased region" description="Polar residues" evidence="5">
    <location>
        <begin position="20"/>
        <end position="33"/>
    </location>
</feature>
<feature type="compositionally biased region" description="Basic and acidic residues" evidence="5">
    <location>
        <begin position="708"/>
        <end position="737"/>
    </location>
</feature>
<feature type="compositionally biased region" description="Basic and acidic residues" evidence="5">
    <location>
        <begin position="971"/>
        <end position="1012"/>
    </location>
</feature>
<feature type="compositionally biased region" description="Polar residues" evidence="5">
    <location>
        <begin position="1027"/>
        <end position="1053"/>
    </location>
</feature>
<feature type="compositionally biased region" description="Basic and acidic residues" evidence="5">
    <location>
        <begin position="1063"/>
        <end position="1102"/>
    </location>
</feature>
<feature type="compositionally biased region" description="Low complexity" evidence="5">
    <location>
        <begin position="1103"/>
        <end position="1118"/>
    </location>
</feature>
<feature type="compositionally biased region" description="Polar residues" evidence="5">
    <location>
        <begin position="1124"/>
        <end position="1168"/>
    </location>
</feature>
<feature type="compositionally biased region" description="Basic and acidic residues" evidence="5">
    <location>
        <begin position="1169"/>
        <end position="1185"/>
    </location>
</feature>
<feature type="compositionally biased region" description="Acidic residues" evidence="5">
    <location>
        <begin position="1186"/>
        <end position="1197"/>
    </location>
</feature>
<feature type="compositionally biased region" description="Polar residues" evidence="5">
    <location>
        <begin position="1201"/>
        <end position="1222"/>
    </location>
</feature>
<feature type="compositionally biased region" description="Polar residues" evidence="5">
    <location>
        <begin position="1257"/>
        <end position="1266"/>
    </location>
</feature>
<feature type="compositionally biased region" description="Pro residues" evidence="5">
    <location>
        <begin position="1299"/>
        <end position="1320"/>
    </location>
</feature>
<feature type="compositionally biased region" description="Pro residues" evidence="5">
    <location>
        <begin position="1365"/>
        <end position="1374"/>
    </location>
</feature>
<feature type="binding site" evidence="4">
    <location>
        <position position="614"/>
    </location>
    <ligand>
        <name>Ca(2+)</name>
        <dbReference type="ChEBI" id="CHEBI:29108"/>
    </ligand>
</feature>
<feature type="binding site" evidence="4">
    <location>
        <position position="616"/>
    </location>
    <ligand>
        <name>Ca(2+)</name>
        <dbReference type="ChEBI" id="CHEBI:29108"/>
    </ligand>
</feature>
<feature type="binding site" evidence="4">
    <location>
        <position position="618"/>
    </location>
    <ligand>
        <name>Ca(2+)</name>
        <dbReference type="ChEBI" id="CHEBI:29108"/>
    </ligand>
</feature>
<feature type="binding site" evidence="4">
    <location>
        <position position="620"/>
    </location>
    <ligand>
        <name>Ca(2+)</name>
        <dbReference type="ChEBI" id="CHEBI:29108"/>
    </ligand>
</feature>
<feature type="binding site" evidence="4">
    <location>
        <position position="625"/>
    </location>
    <ligand>
        <name>Ca(2+)</name>
        <dbReference type="ChEBI" id="CHEBI:29108"/>
    </ligand>
</feature>
<evidence type="ECO:0000250" key="1"/>
<evidence type="ECO:0000255" key="2"/>
<evidence type="ECO:0000255" key="3">
    <source>
        <dbReference type="PROSITE-ProRule" id="PRU00077"/>
    </source>
</evidence>
<evidence type="ECO:0000255" key="4">
    <source>
        <dbReference type="PROSITE-ProRule" id="PRU00448"/>
    </source>
</evidence>
<evidence type="ECO:0000256" key="5">
    <source>
        <dbReference type="SAM" id="MobiDB-lite"/>
    </source>
</evidence>
<evidence type="ECO:0000305" key="6"/>
<proteinExistence type="inferred from homology"/>
<organism>
    <name type="scientific">Candida glabrata (strain ATCC 2001 / BCRC 20586 / JCM 3761 / NBRC 0622 / NRRL Y-65 / CBS 138)</name>
    <name type="common">Yeast</name>
    <name type="synonym">Nakaseomyces glabratus</name>
    <dbReference type="NCBI Taxonomy" id="284593"/>
    <lineage>
        <taxon>Eukaryota</taxon>
        <taxon>Fungi</taxon>
        <taxon>Dikarya</taxon>
        <taxon>Ascomycota</taxon>
        <taxon>Saccharomycotina</taxon>
        <taxon>Saccharomycetes</taxon>
        <taxon>Saccharomycetales</taxon>
        <taxon>Saccharomycetaceae</taxon>
        <taxon>Nakaseomyces</taxon>
    </lineage>
</organism>
<name>PAN1_CANGA</name>
<comment type="function">
    <text evidence="1">Component of the PAN1 actin cytoskeleton-regulatory complex required for the internalization of endosomes during actin-coupled endocytosis. The complex links the site of endocytosis to the cell membrane-associated actin cytoskeleton. Mediates uptake of external molecules and vacuolar degradation of plasma membrane proteins. Plays a role in the proper organization of the cell membrane-associated actin cytoskeleton and promotes its destabilization (By similarity).</text>
</comment>
<comment type="subunit">
    <text evidence="1">Component of the PAN1 actin cytoskeleton-regulatory complex.</text>
</comment>
<comment type="subcellular location">
    <subcellularLocation>
        <location evidence="1">Cell membrane</location>
        <topology evidence="1">Peripheral membrane protein</topology>
        <orientation evidence="1">Cytoplasmic side</orientation>
    </subcellularLocation>
    <subcellularLocation>
        <location evidence="1">Endosome membrane</location>
        <topology evidence="1">Peripheral membrane protein</topology>
        <orientation evidence="1">Cytoplasmic side</orientation>
    </subcellularLocation>
    <subcellularLocation>
        <location evidence="1">Cytoplasm</location>
        <location evidence="1">Cytoskeleton</location>
        <location evidence="1">Actin patch</location>
    </subcellularLocation>
    <text evidence="1">Cytoplasmic and cortical actin patches.</text>
</comment>
<comment type="similarity">
    <text evidence="6">Belongs to the PAN1 family.</text>
</comment>
<protein>
    <recommendedName>
        <fullName>Actin cytoskeleton-regulatory complex protein PAN1</fullName>
    </recommendedName>
</protein>
<dbReference type="EMBL" id="CR380956">
    <property type="protein sequence ID" value="CAG60736.1"/>
    <property type="molecule type" value="Genomic_DNA"/>
</dbReference>
<dbReference type="RefSeq" id="XP_447787.1">
    <property type="nucleotide sequence ID" value="XM_447787.1"/>
</dbReference>
<dbReference type="SMR" id="Q6FPQ7"/>
<dbReference type="FunCoup" id="Q6FPQ7">
    <property type="interactions" value="82"/>
</dbReference>
<dbReference type="STRING" id="284593.Q6FPQ7"/>
<dbReference type="EnsemblFungi" id="CAGL0J01892g-T">
    <property type="protein sequence ID" value="CAGL0J01892g-T-p1"/>
    <property type="gene ID" value="CAGL0J01892g"/>
</dbReference>
<dbReference type="GeneID" id="2889812"/>
<dbReference type="KEGG" id="cgr:2889812"/>
<dbReference type="CGD" id="CAL0133524">
    <property type="gene designation" value="PAN1"/>
</dbReference>
<dbReference type="VEuPathDB" id="FungiDB:CAGL0J01892g"/>
<dbReference type="eggNOG" id="KOG0998">
    <property type="taxonomic scope" value="Eukaryota"/>
</dbReference>
<dbReference type="HOGENOM" id="CLU_006042_0_0_1"/>
<dbReference type="InParanoid" id="Q6FPQ7"/>
<dbReference type="OMA" id="GMPGQWG"/>
<dbReference type="Proteomes" id="UP000002428">
    <property type="component" value="Chromosome J"/>
</dbReference>
<dbReference type="GO" id="GO:0030479">
    <property type="term" value="C:actin cortical patch"/>
    <property type="evidence" value="ECO:0007669"/>
    <property type="project" value="UniProtKB-SubCell"/>
</dbReference>
<dbReference type="GO" id="GO:1990964">
    <property type="term" value="C:actin cytoskeleton-regulatory complex"/>
    <property type="evidence" value="ECO:0007669"/>
    <property type="project" value="EnsemblFungi"/>
</dbReference>
<dbReference type="GO" id="GO:0010008">
    <property type="term" value="C:endosome membrane"/>
    <property type="evidence" value="ECO:0007669"/>
    <property type="project" value="UniProtKB-SubCell"/>
</dbReference>
<dbReference type="GO" id="GO:0005634">
    <property type="term" value="C:nucleus"/>
    <property type="evidence" value="ECO:0007669"/>
    <property type="project" value="EnsemblFungi"/>
</dbReference>
<dbReference type="GO" id="GO:0005886">
    <property type="term" value="C:plasma membrane"/>
    <property type="evidence" value="ECO:0007669"/>
    <property type="project" value="UniProtKB-SubCell"/>
</dbReference>
<dbReference type="GO" id="GO:0003779">
    <property type="term" value="F:actin binding"/>
    <property type="evidence" value="ECO:0007669"/>
    <property type="project" value="UniProtKB-KW"/>
</dbReference>
<dbReference type="GO" id="GO:0071933">
    <property type="term" value="F:Arp2/3 complex binding"/>
    <property type="evidence" value="ECO:0007669"/>
    <property type="project" value="EnsemblFungi"/>
</dbReference>
<dbReference type="GO" id="GO:0005509">
    <property type="term" value="F:calcium ion binding"/>
    <property type="evidence" value="ECO:0007669"/>
    <property type="project" value="InterPro"/>
</dbReference>
<dbReference type="GO" id="GO:0000147">
    <property type="term" value="P:actin cortical patch assembly"/>
    <property type="evidence" value="ECO:0007669"/>
    <property type="project" value="EnsemblFungi"/>
</dbReference>
<dbReference type="GO" id="GO:0007120">
    <property type="term" value="P:axial cellular bud site selection"/>
    <property type="evidence" value="ECO:0007669"/>
    <property type="project" value="EnsemblFungi"/>
</dbReference>
<dbReference type="GO" id="GO:0007121">
    <property type="term" value="P:bipolar cellular bud site selection"/>
    <property type="evidence" value="ECO:0007669"/>
    <property type="project" value="EnsemblFungi"/>
</dbReference>
<dbReference type="GO" id="GO:0071555">
    <property type="term" value="P:cell wall organization"/>
    <property type="evidence" value="ECO:0007669"/>
    <property type="project" value="EnsemblFungi"/>
</dbReference>
<dbReference type="GO" id="GO:0006897">
    <property type="term" value="P:endocytosis"/>
    <property type="evidence" value="ECO:0007669"/>
    <property type="project" value="UniProtKB-KW"/>
</dbReference>
<dbReference type="GO" id="GO:0016197">
    <property type="term" value="P:endosomal transport"/>
    <property type="evidence" value="ECO:0007669"/>
    <property type="project" value="TreeGrafter"/>
</dbReference>
<dbReference type="GO" id="GO:2000601">
    <property type="term" value="P:positive regulation of Arp2/3 complex-mediated actin nucleation"/>
    <property type="evidence" value="ECO:0007669"/>
    <property type="project" value="EnsemblFungi"/>
</dbReference>
<dbReference type="GO" id="GO:0061709">
    <property type="term" value="P:reticulophagy"/>
    <property type="evidence" value="ECO:0007669"/>
    <property type="project" value="EnsemblFungi"/>
</dbReference>
<dbReference type="CDD" id="cd00052">
    <property type="entry name" value="EH"/>
    <property type="match status" value="2"/>
</dbReference>
<dbReference type="FunFam" id="1.10.238.10:FF:000349">
    <property type="entry name" value="Actin cytoskeleton-regulatory complex protein PAN1"/>
    <property type="match status" value="1"/>
</dbReference>
<dbReference type="Gene3D" id="1.10.238.10">
    <property type="entry name" value="EF-hand"/>
    <property type="match status" value="2"/>
</dbReference>
<dbReference type="InterPro" id="IPR013182">
    <property type="entry name" value="DUF1720"/>
</dbReference>
<dbReference type="InterPro" id="IPR011992">
    <property type="entry name" value="EF-hand-dom_pair"/>
</dbReference>
<dbReference type="InterPro" id="IPR018247">
    <property type="entry name" value="EF_Hand_1_Ca_BS"/>
</dbReference>
<dbReference type="InterPro" id="IPR002048">
    <property type="entry name" value="EF_hand_dom"/>
</dbReference>
<dbReference type="InterPro" id="IPR000261">
    <property type="entry name" value="EH_dom"/>
</dbReference>
<dbReference type="PANTHER" id="PTHR11216:SF173">
    <property type="entry name" value="ACTIN CYTOSKELETON-REGULATORY COMPLEX PROTEIN PAN1"/>
    <property type="match status" value="1"/>
</dbReference>
<dbReference type="PANTHER" id="PTHR11216">
    <property type="entry name" value="EH DOMAIN"/>
    <property type="match status" value="1"/>
</dbReference>
<dbReference type="Pfam" id="PF08226">
    <property type="entry name" value="DUF1720"/>
    <property type="match status" value="1"/>
</dbReference>
<dbReference type="Pfam" id="PF12763">
    <property type="entry name" value="EH"/>
    <property type="match status" value="2"/>
</dbReference>
<dbReference type="SMART" id="SM00054">
    <property type="entry name" value="EFh"/>
    <property type="match status" value="2"/>
</dbReference>
<dbReference type="SMART" id="SM00027">
    <property type="entry name" value="EH"/>
    <property type="match status" value="2"/>
</dbReference>
<dbReference type="SUPFAM" id="SSF47473">
    <property type="entry name" value="EF-hand"/>
    <property type="match status" value="2"/>
</dbReference>
<dbReference type="PROSITE" id="PS00018">
    <property type="entry name" value="EF_HAND_1"/>
    <property type="match status" value="1"/>
</dbReference>
<dbReference type="PROSITE" id="PS50222">
    <property type="entry name" value="EF_HAND_2"/>
    <property type="match status" value="2"/>
</dbReference>
<dbReference type="PROSITE" id="PS50031">
    <property type="entry name" value="EH"/>
    <property type="match status" value="2"/>
</dbReference>
<gene>
    <name type="primary">PAN1</name>
    <name type="ordered locus">CAGL0J01892g</name>
</gene>
<keyword id="KW-0009">Actin-binding</keyword>
<keyword id="KW-0106">Calcium</keyword>
<keyword id="KW-1003">Cell membrane</keyword>
<keyword id="KW-0175">Coiled coil</keyword>
<keyword id="KW-0963">Cytoplasm</keyword>
<keyword id="KW-0206">Cytoskeleton</keyword>
<keyword id="KW-0254">Endocytosis</keyword>
<keyword id="KW-0967">Endosome</keyword>
<keyword id="KW-0472">Membrane</keyword>
<keyword id="KW-0479">Metal-binding</keyword>
<keyword id="KW-1185">Reference proteome</keyword>
<keyword id="KW-0677">Repeat</keyword>
<accession>Q6FPQ7</accession>